<protein>
    <recommendedName>
        <fullName>34 kDa cell wall protein</fullName>
    </recommendedName>
</protein>
<name>CWP03_TOBAC</name>
<keyword id="KW-0134">Cell wall</keyword>
<keyword id="KW-0903">Direct protein sequencing</keyword>
<keyword id="KW-1185">Reference proteome</keyword>
<keyword id="KW-0964">Secreted</keyword>
<dbReference type="PaxDb" id="4097-P80780"/>
<dbReference type="Proteomes" id="UP000084051">
    <property type="component" value="Unplaced"/>
</dbReference>
<dbReference type="GO" id="GO:0005576">
    <property type="term" value="C:extracellular region"/>
    <property type="evidence" value="ECO:0007669"/>
    <property type="project" value="UniProtKB-KW"/>
</dbReference>
<feature type="chain" id="PRO_0000079630" description="34 kDa cell wall protein">
    <location>
        <begin position="1"/>
        <end position="10" status="greater than"/>
    </location>
</feature>
<feature type="non-terminal residue" evidence="2">
    <location>
        <position position="10"/>
    </location>
</feature>
<comment type="subcellular location">
    <subcellularLocation>
        <location evidence="1">Secreted</location>
        <location evidence="1">Cell wall</location>
    </subcellularLocation>
</comment>
<reference evidence="3" key="1">
    <citation type="journal article" date="1997" name="J. Biol. Chem.">
        <title>Differential extraction and protein sequencing reveals major differences in patterns of primary cell wall proteins from plants.</title>
        <authorList>
            <person name="Robertson D."/>
            <person name="Mitchell G.P."/>
            <person name="Gilroy J.S."/>
            <person name="Gerrish C."/>
            <person name="Bolwell G.P."/>
            <person name="Slabas A.R."/>
        </authorList>
    </citation>
    <scope>PROTEIN SEQUENCE</scope>
    <scope>SUBCELLULAR LOCATION</scope>
</reference>
<sequence>AHVEVPNSLY</sequence>
<proteinExistence type="evidence at protein level"/>
<organism>
    <name type="scientific">Nicotiana tabacum</name>
    <name type="common">Common tobacco</name>
    <dbReference type="NCBI Taxonomy" id="4097"/>
    <lineage>
        <taxon>Eukaryota</taxon>
        <taxon>Viridiplantae</taxon>
        <taxon>Streptophyta</taxon>
        <taxon>Embryophyta</taxon>
        <taxon>Tracheophyta</taxon>
        <taxon>Spermatophyta</taxon>
        <taxon>Magnoliopsida</taxon>
        <taxon>eudicotyledons</taxon>
        <taxon>Gunneridae</taxon>
        <taxon>Pentapetalae</taxon>
        <taxon>asterids</taxon>
        <taxon>lamiids</taxon>
        <taxon>Solanales</taxon>
        <taxon>Solanaceae</taxon>
        <taxon>Nicotianoideae</taxon>
        <taxon>Nicotianeae</taxon>
        <taxon>Nicotiana</taxon>
    </lineage>
</organism>
<evidence type="ECO:0000269" key="1">
    <source>
    </source>
</evidence>
<evidence type="ECO:0000303" key="2">
    <source>
    </source>
</evidence>
<evidence type="ECO:0000305" key="3"/>
<accession>P80780</accession>